<proteinExistence type="inferred from homology"/>
<comment type="function">
    <text evidence="1">Catalyzes the condensation of formaldehyde and glutathione to S-hydroxymethylglutathione.</text>
</comment>
<comment type="catalytic activity">
    <reaction>
        <text>S-(hydroxymethyl)glutathione = glutathione + formaldehyde</text>
        <dbReference type="Rhea" id="RHEA:22488"/>
        <dbReference type="ChEBI" id="CHEBI:16842"/>
        <dbReference type="ChEBI" id="CHEBI:57925"/>
        <dbReference type="ChEBI" id="CHEBI:58758"/>
        <dbReference type="EC" id="4.4.1.22"/>
    </reaction>
</comment>
<comment type="cofactor">
    <cofactor evidence="2">
        <name>Zn(2+)</name>
        <dbReference type="ChEBI" id="CHEBI:29105"/>
    </cofactor>
    <text evidence="2">Binds 2 Zn(2+) ions per subunit.</text>
</comment>
<comment type="pathway">
    <text>One-carbon metabolism; formaldehyde degradation; formate from formaldehyde (glutathione route): step 1/3.</text>
</comment>
<comment type="similarity">
    <text evidence="3">Belongs to the Gfa family.</text>
</comment>
<dbReference type="EC" id="4.4.1.22"/>
<dbReference type="EMBL" id="CABT02000055">
    <property type="protein sequence ID" value="CCC05220.1"/>
    <property type="molecule type" value="Genomic_DNA"/>
</dbReference>
<dbReference type="RefSeq" id="XP_003347275.1">
    <property type="nucleotide sequence ID" value="XM_003347227.1"/>
</dbReference>
<dbReference type="SMR" id="D1ZK87"/>
<dbReference type="STRING" id="771870.D1ZK87"/>
<dbReference type="GeneID" id="10804699"/>
<dbReference type="KEGG" id="smp:10804699"/>
<dbReference type="VEuPathDB" id="FungiDB:SMAC_08712"/>
<dbReference type="eggNOG" id="ENOG502SKH9">
    <property type="taxonomic scope" value="Eukaryota"/>
</dbReference>
<dbReference type="HOGENOM" id="CLU_090716_0_0_1"/>
<dbReference type="InParanoid" id="D1ZK87"/>
<dbReference type="OMA" id="ECGTHMY"/>
<dbReference type="OrthoDB" id="3446116at2759"/>
<dbReference type="UniPathway" id="UPA00562">
    <property type="reaction ID" value="UER00621"/>
</dbReference>
<dbReference type="Proteomes" id="UP000001881">
    <property type="component" value="Unassembled WGS sequence"/>
</dbReference>
<dbReference type="GO" id="GO:0046872">
    <property type="term" value="F:metal ion binding"/>
    <property type="evidence" value="ECO:0007669"/>
    <property type="project" value="UniProtKB-KW"/>
</dbReference>
<dbReference type="GO" id="GO:0051907">
    <property type="term" value="F:S-(hydroxymethyl)glutathione synthase activity"/>
    <property type="evidence" value="ECO:0007669"/>
    <property type="project" value="UniProtKB-EC"/>
</dbReference>
<dbReference type="GO" id="GO:0046294">
    <property type="term" value="P:formaldehyde catabolic process"/>
    <property type="evidence" value="ECO:0007669"/>
    <property type="project" value="UniProtKB-UniPathway"/>
</dbReference>
<dbReference type="Gene3D" id="3.90.1590.10">
    <property type="entry name" value="glutathione-dependent formaldehyde- activating enzyme (gfa)"/>
    <property type="match status" value="1"/>
</dbReference>
<dbReference type="InterPro" id="IPR006913">
    <property type="entry name" value="CENP-V/GFA"/>
</dbReference>
<dbReference type="InterPro" id="IPR011057">
    <property type="entry name" value="Mss4-like_sf"/>
</dbReference>
<dbReference type="PANTHER" id="PTHR33337:SF40">
    <property type="entry name" value="CENP-V_GFA DOMAIN-CONTAINING PROTEIN-RELATED"/>
    <property type="match status" value="1"/>
</dbReference>
<dbReference type="PANTHER" id="PTHR33337">
    <property type="entry name" value="GFA DOMAIN-CONTAINING PROTEIN"/>
    <property type="match status" value="1"/>
</dbReference>
<dbReference type="Pfam" id="PF04828">
    <property type="entry name" value="GFA"/>
    <property type="match status" value="1"/>
</dbReference>
<dbReference type="SUPFAM" id="SSF51316">
    <property type="entry name" value="Mss4-like"/>
    <property type="match status" value="1"/>
</dbReference>
<dbReference type="PROSITE" id="PS51891">
    <property type="entry name" value="CENP_V_GFA"/>
    <property type="match status" value="1"/>
</dbReference>
<gene>
    <name type="ORF">SMAC_08712</name>
</gene>
<evidence type="ECO:0000250" key="1"/>
<evidence type="ECO:0000255" key="2">
    <source>
        <dbReference type="PROSITE-ProRule" id="PRU01239"/>
    </source>
</evidence>
<evidence type="ECO:0000305" key="3"/>
<name>GFA_SORMK</name>
<accession>D1ZK87</accession>
<accession>F7W9V3</accession>
<organism>
    <name type="scientific">Sordaria macrospora (strain ATCC MYA-333 / DSM 997 / K(L3346) / K-hell)</name>
    <dbReference type="NCBI Taxonomy" id="771870"/>
    <lineage>
        <taxon>Eukaryota</taxon>
        <taxon>Fungi</taxon>
        <taxon>Dikarya</taxon>
        <taxon>Ascomycota</taxon>
        <taxon>Pezizomycotina</taxon>
        <taxon>Sordariomycetes</taxon>
        <taxon>Sordariomycetidae</taxon>
        <taxon>Sordariales</taxon>
        <taxon>Sordariaceae</taxon>
        <taxon>Sordaria</taxon>
    </lineage>
</organism>
<reference key="1">
    <citation type="journal article" date="2010" name="PLoS Genet.">
        <title>De novo assembly of a 40 Mb eukaryotic genome from short sequence reads: Sordaria macrospora, a model organism for fungal morphogenesis.</title>
        <authorList>
            <person name="Nowrousian M."/>
            <person name="Stajich J.E."/>
            <person name="Chu M."/>
            <person name="Engh I."/>
            <person name="Espagne E."/>
            <person name="Halliday K."/>
            <person name="Kamerewerd J."/>
            <person name="Kempken F."/>
            <person name="Knab B."/>
            <person name="Kuo H.-C."/>
            <person name="Osiewacz H.D."/>
            <person name="Poeggeler S."/>
            <person name="Read N.D."/>
            <person name="Seiler S."/>
            <person name="Smith K.M."/>
            <person name="Zickler D."/>
            <person name="Kueck U."/>
            <person name="Freitag M."/>
        </authorList>
    </citation>
    <scope>NUCLEOTIDE SEQUENCE [LARGE SCALE GENOMIC DNA]</scope>
    <source>
        <strain>ATCC MYA-333 / DSM 997 / K(L3346) / K-hell</strain>
    </source>
</reference>
<keyword id="KW-0456">Lyase</keyword>
<keyword id="KW-0479">Metal-binding</keyword>
<keyword id="KW-1185">Reference proteome</keyword>
<keyword id="KW-0862">Zinc</keyword>
<feature type="chain" id="PRO_0000406166" description="Putative glutathione-dependent formaldehyde-activating enzyme">
    <location>
        <begin position="1"/>
        <end position="237"/>
    </location>
</feature>
<feature type="domain" description="CENP-V/GFA" evidence="2">
    <location>
        <begin position="38"/>
        <end position="152"/>
    </location>
</feature>
<feature type="binding site" evidence="2">
    <location>
        <position position="42"/>
    </location>
    <ligand>
        <name>Zn(2+)</name>
        <dbReference type="ChEBI" id="CHEBI:29105"/>
        <label>1</label>
        <note>structural</note>
    </ligand>
</feature>
<feature type="binding site" evidence="2">
    <location>
        <position position="44"/>
    </location>
    <ligand>
        <name>Zn(2+)</name>
        <dbReference type="ChEBI" id="CHEBI:29105"/>
        <label>1</label>
        <note>structural</note>
    </ligand>
</feature>
<feature type="binding site" evidence="2">
    <location>
        <position position="67"/>
    </location>
    <ligand>
        <name>Zn(2+)</name>
        <dbReference type="ChEBI" id="CHEBI:29105"/>
        <label>2</label>
        <note>catalytic</note>
    </ligand>
</feature>
<feature type="binding site" evidence="2">
    <location>
        <position position="69"/>
    </location>
    <ligand>
        <name>Zn(2+)</name>
        <dbReference type="ChEBI" id="CHEBI:29105"/>
        <label>2</label>
        <note>catalytic</note>
    </ligand>
</feature>
<feature type="binding site" evidence="2">
    <location>
        <position position="72"/>
    </location>
    <ligand>
        <name>Zn(2+)</name>
        <dbReference type="ChEBI" id="CHEBI:29105"/>
        <label>2</label>
        <note>catalytic</note>
    </ligand>
</feature>
<feature type="binding site" evidence="2">
    <location>
        <position position="114"/>
    </location>
    <ligand>
        <name>Zn(2+)</name>
        <dbReference type="ChEBI" id="CHEBI:29105"/>
        <label>1</label>
        <note>structural</note>
    </ligand>
</feature>
<feature type="binding site" evidence="2">
    <location>
        <position position="117"/>
    </location>
    <ligand>
        <name>Zn(2+)</name>
        <dbReference type="ChEBI" id="CHEBI:29105"/>
        <label>1</label>
        <note>structural</note>
    </ligand>
</feature>
<protein>
    <recommendedName>
        <fullName>Putative glutathione-dependent formaldehyde-activating enzyme</fullName>
        <ecNumber>4.4.1.22</ecNumber>
    </recommendedName>
    <alternativeName>
        <fullName>S-(hydroxymethyl)glutathione synthase</fullName>
    </alternativeName>
</protein>
<sequence>MTAALSSEISLHPLLDNLPSSASTTTKQEEPSLPALPITLICHCPPSSSPGPIKVTLTNQILHNHACGCSKCWKPSGALFSVVGVVPSSGLSVIANAEKLEVVDENATIQRWKCKECGVHLYGRIEKQHPFRGLDFVHGELALGQSGGSEGEGENEGGGLGEGKVEFAAFVSSIIEGGFEPHAHANGDEGKGGNIKQVRDRLREIFGEKVYDCLSPSLMDVIAEWEGRRSGKLKAVL</sequence>